<dbReference type="EMBL" id="CP000237">
    <property type="protein sequence ID" value="ABD45677.1"/>
    <property type="molecule type" value="Genomic_DNA"/>
</dbReference>
<dbReference type="SMR" id="Q2GEY4"/>
<dbReference type="STRING" id="222891.NSE_0061"/>
<dbReference type="KEGG" id="nse:NSE_0061"/>
<dbReference type="eggNOG" id="COG0238">
    <property type="taxonomic scope" value="Bacteria"/>
</dbReference>
<dbReference type="HOGENOM" id="CLU_148710_0_3_5"/>
<dbReference type="OrthoDB" id="9812008at2"/>
<dbReference type="Proteomes" id="UP000001942">
    <property type="component" value="Chromosome"/>
</dbReference>
<dbReference type="GO" id="GO:1990904">
    <property type="term" value="C:ribonucleoprotein complex"/>
    <property type="evidence" value="ECO:0007669"/>
    <property type="project" value="UniProtKB-KW"/>
</dbReference>
<dbReference type="GO" id="GO:0005840">
    <property type="term" value="C:ribosome"/>
    <property type="evidence" value="ECO:0007669"/>
    <property type="project" value="UniProtKB-KW"/>
</dbReference>
<dbReference type="GO" id="GO:0070181">
    <property type="term" value="F:small ribosomal subunit rRNA binding"/>
    <property type="evidence" value="ECO:0007669"/>
    <property type="project" value="TreeGrafter"/>
</dbReference>
<dbReference type="GO" id="GO:0003735">
    <property type="term" value="F:structural constituent of ribosome"/>
    <property type="evidence" value="ECO:0007669"/>
    <property type="project" value="InterPro"/>
</dbReference>
<dbReference type="GO" id="GO:0006412">
    <property type="term" value="P:translation"/>
    <property type="evidence" value="ECO:0007669"/>
    <property type="project" value="UniProtKB-UniRule"/>
</dbReference>
<dbReference type="Gene3D" id="4.10.640.10">
    <property type="entry name" value="Ribosomal protein S18"/>
    <property type="match status" value="1"/>
</dbReference>
<dbReference type="HAMAP" id="MF_00270">
    <property type="entry name" value="Ribosomal_bS18"/>
    <property type="match status" value="1"/>
</dbReference>
<dbReference type="InterPro" id="IPR001648">
    <property type="entry name" value="Ribosomal_bS18"/>
</dbReference>
<dbReference type="InterPro" id="IPR036870">
    <property type="entry name" value="Ribosomal_bS18_sf"/>
</dbReference>
<dbReference type="NCBIfam" id="TIGR00165">
    <property type="entry name" value="S18"/>
    <property type="match status" value="1"/>
</dbReference>
<dbReference type="PANTHER" id="PTHR13479">
    <property type="entry name" value="30S RIBOSOMAL PROTEIN S18"/>
    <property type="match status" value="1"/>
</dbReference>
<dbReference type="PANTHER" id="PTHR13479:SF40">
    <property type="entry name" value="SMALL RIBOSOMAL SUBUNIT PROTEIN BS18M"/>
    <property type="match status" value="1"/>
</dbReference>
<dbReference type="Pfam" id="PF01084">
    <property type="entry name" value="Ribosomal_S18"/>
    <property type="match status" value="1"/>
</dbReference>
<dbReference type="PRINTS" id="PR00974">
    <property type="entry name" value="RIBOSOMALS18"/>
</dbReference>
<dbReference type="SUPFAM" id="SSF46911">
    <property type="entry name" value="Ribosomal protein S18"/>
    <property type="match status" value="1"/>
</dbReference>
<keyword id="KW-0687">Ribonucleoprotein</keyword>
<keyword id="KW-0689">Ribosomal protein</keyword>
<keyword id="KW-0694">RNA-binding</keyword>
<keyword id="KW-0699">rRNA-binding</keyword>
<reference key="1">
    <citation type="journal article" date="2006" name="PLoS Genet.">
        <title>Comparative genomics of emerging human ehrlichiosis agents.</title>
        <authorList>
            <person name="Dunning Hotopp J.C."/>
            <person name="Lin M."/>
            <person name="Madupu R."/>
            <person name="Crabtree J."/>
            <person name="Angiuoli S.V."/>
            <person name="Eisen J.A."/>
            <person name="Seshadri R."/>
            <person name="Ren Q."/>
            <person name="Wu M."/>
            <person name="Utterback T.R."/>
            <person name="Smith S."/>
            <person name="Lewis M."/>
            <person name="Khouri H."/>
            <person name="Zhang C."/>
            <person name="Niu H."/>
            <person name="Lin Q."/>
            <person name="Ohashi N."/>
            <person name="Zhi N."/>
            <person name="Nelson W.C."/>
            <person name="Brinkac L.M."/>
            <person name="Dodson R.J."/>
            <person name="Rosovitz M.J."/>
            <person name="Sundaram J.P."/>
            <person name="Daugherty S.C."/>
            <person name="Davidsen T."/>
            <person name="Durkin A.S."/>
            <person name="Gwinn M.L."/>
            <person name="Haft D.H."/>
            <person name="Selengut J.D."/>
            <person name="Sullivan S.A."/>
            <person name="Zafar N."/>
            <person name="Zhou L."/>
            <person name="Benahmed F."/>
            <person name="Forberger H."/>
            <person name="Halpin R."/>
            <person name="Mulligan S."/>
            <person name="Robinson J."/>
            <person name="White O."/>
            <person name="Rikihisa Y."/>
            <person name="Tettelin H."/>
        </authorList>
    </citation>
    <scope>NUCLEOTIDE SEQUENCE [LARGE SCALE GENOMIC DNA]</scope>
    <source>
        <strain>ATCC VR-367 / Miyayama</strain>
    </source>
</reference>
<feature type="chain" id="PRO_0000345516" description="Small ribosomal subunit protein bS18">
    <location>
        <begin position="1"/>
        <end position="73"/>
    </location>
</feature>
<comment type="function">
    <text evidence="1">Binds as a heterodimer with protein bS6 to the central domain of the 16S rRNA, where it helps stabilize the platform of the 30S subunit.</text>
</comment>
<comment type="subunit">
    <text evidence="1">Part of the 30S ribosomal subunit. Forms a tight heterodimer with protein bS6.</text>
</comment>
<comment type="similarity">
    <text evidence="1">Belongs to the bacterial ribosomal protein bS18 family.</text>
</comment>
<protein>
    <recommendedName>
        <fullName evidence="1">Small ribosomal subunit protein bS18</fullName>
    </recommendedName>
    <alternativeName>
        <fullName evidence="2">30S ribosomal protein S18</fullName>
    </alternativeName>
</protein>
<sequence length="73" mass="8495">MAPVDVESQVELDLKIEDFDYKNVALIKRFMTPVGRVLSRRATGLSAKKQRKMAKEVRKMKFLALVPYCDRHK</sequence>
<gene>
    <name evidence="1" type="primary">rpsR</name>
    <name type="ordered locus">NSE_0061</name>
</gene>
<proteinExistence type="inferred from homology"/>
<name>RS18_NEOSM</name>
<organism>
    <name type="scientific">Neorickettsia sennetsu (strain ATCC VR-367 / Miyayama)</name>
    <name type="common">Ehrlichia sennetsu</name>
    <dbReference type="NCBI Taxonomy" id="222891"/>
    <lineage>
        <taxon>Bacteria</taxon>
        <taxon>Pseudomonadati</taxon>
        <taxon>Pseudomonadota</taxon>
        <taxon>Alphaproteobacteria</taxon>
        <taxon>Rickettsiales</taxon>
        <taxon>Anaplasmataceae</taxon>
        <taxon>Neorickettsia</taxon>
    </lineage>
</organism>
<accession>Q2GEY4</accession>
<evidence type="ECO:0000255" key="1">
    <source>
        <dbReference type="HAMAP-Rule" id="MF_00270"/>
    </source>
</evidence>
<evidence type="ECO:0000305" key="2"/>